<gene>
    <name evidence="1" type="primary">rpsU</name>
    <name type="ordered locus">CPS_4337</name>
</gene>
<organism>
    <name type="scientific">Colwellia psychrerythraea (strain 34H / ATCC BAA-681)</name>
    <name type="common">Vibrio psychroerythus</name>
    <dbReference type="NCBI Taxonomy" id="167879"/>
    <lineage>
        <taxon>Bacteria</taxon>
        <taxon>Pseudomonadati</taxon>
        <taxon>Pseudomonadota</taxon>
        <taxon>Gammaproteobacteria</taxon>
        <taxon>Alteromonadales</taxon>
        <taxon>Colwelliaceae</taxon>
        <taxon>Colwellia</taxon>
    </lineage>
</organism>
<comment type="similarity">
    <text evidence="1">Belongs to the bacterial ribosomal protein bS21 family.</text>
</comment>
<name>RS21_COLP3</name>
<reference key="1">
    <citation type="journal article" date="2005" name="Proc. Natl. Acad. Sci. U.S.A.">
        <title>The psychrophilic lifestyle as revealed by the genome sequence of Colwellia psychrerythraea 34H through genomic and proteomic analyses.</title>
        <authorList>
            <person name="Methe B.A."/>
            <person name="Nelson K.E."/>
            <person name="Deming J.W."/>
            <person name="Momen B."/>
            <person name="Melamud E."/>
            <person name="Zhang X."/>
            <person name="Moult J."/>
            <person name="Madupu R."/>
            <person name="Nelson W.C."/>
            <person name="Dodson R.J."/>
            <person name="Brinkac L.M."/>
            <person name="Daugherty S.C."/>
            <person name="Durkin A.S."/>
            <person name="DeBoy R.T."/>
            <person name="Kolonay J.F."/>
            <person name="Sullivan S.A."/>
            <person name="Zhou L."/>
            <person name="Davidsen T.M."/>
            <person name="Wu M."/>
            <person name="Huston A.L."/>
            <person name="Lewis M."/>
            <person name="Weaver B."/>
            <person name="Weidman J.F."/>
            <person name="Khouri H."/>
            <person name="Utterback T.R."/>
            <person name="Feldblyum T.V."/>
            <person name="Fraser C.M."/>
        </authorList>
    </citation>
    <scope>NUCLEOTIDE SEQUENCE [LARGE SCALE GENOMIC DNA]</scope>
    <source>
        <strain>34H / ATCC BAA-681</strain>
    </source>
</reference>
<dbReference type="EMBL" id="CP000083">
    <property type="protein sequence ID" value="AAZ24173.1"/>
    <property type="molecule type" value="Genomic_DNA"/>
</dbReference>
<dbReference type="RefSeq" id="WP_011045067.1">
    <property type="nucleotide sequence ID" value="NC_003910.7"/>
</dbReference>
<dbReference type="SMR" id="Q47W36"/>
<dbReference type="STRING" id="167879.CPS_4337"/>
<dbReference type="DNASU" id="3519560"/>
<dbReference type="KEGG" id="cps:CPS_4337"/>
<dbReference type="eggNOG" id="COG0828">
    <property type="taxonomic scope" value="Bacteria"/>
</dbReference>
<dbReference type="HOGENOM" id="CLU_159258_1_0_6"/>
<dbReference type="Proteomes" id="UP000000547">
    <property type="component" value="Chromosome"/>
</dbReference>
<dbReference type="GO" id="GO:1990904">
    <property type="term" value="C:ribonucleoprotein complex"/>
    <property type="evidence" value="ECO:0007669"/>
    <property type="project" value="UniProtKB-KW"/>
</dbReference>
<dbReference type="GO" id="GO:0005840">
    <property type="term" value="C:ribosome"/>
    <property type="evidence" value="ECO:0007669"/>
    <property type="project" value="UniProtKB-KW"/>
</dbReference>
<dbReference type="GO" id="GO:0003735">
    <property type="term" value="F:structural constituent of ribosome"/>
    <property type="evidence" value="ECO:0007669"/>
    <property type="project" value="InterPro"/>
</dbReference>
<dbReference type="GO" id="GO:0006412">
    <property type="term" value="P:translation"/>
    <property type="evidence" value="ECO:0007669"/>
    <property type="project" value="UniProtKB-UniRule"/>
</dbReference>
<dbReference type="Gene3D" id="1.20.5.1150">
    <property type="entry name" value="Ribosomal protein S8"/>
    <property type="match status" value="1"/>
</dbReference>
<dbReference type="HAMAP" id="MF_00358">
    <property type="entry name" value="Ribosomal_bS21"/>
    <property type="match status" value="1"/>
</dbReference>
<dbReference type="InterPro" id="IPR001911">
    <property type="entry name" value="Ribosomal_bS21"/>
</dbReference>
<dbReference type="InterPro" id="IPR018278">
    <property type="entry name" value="Ribosomal_bS21_CS"/>
</dbReference>
<dbReference type="InterPro" id="IPR038380">
    <property type="entry name" value="Ribosomal_bS21_sf"/>
</dbReference>
<dbReference type="NCBIfam" id="TIGR00030">
    <property type="entry name" value="S21p"/>
    <property type="match status" value="1"/>
</dbReference>
<dbReference type="PANTHER" id="PTHR21109">
    <property type="entry name" value="MITOCHONDRIAL 28S RIBOSOMAL PROTEIN S21"/>
    <property type="match status" value="1"/>
</dbReference>
<dbReference type="PANTHER" id="PTHR21109:SF22">
    <property type="entry name" value="SMALL RIBOSOMAL SUBUNIT PROTEIN BS21"/>
    <property type="match status" value="1"/>
</dbReference>
<dbReference type="Pfam" id="PF01165">
    <property type="entry name" value="Ribosomal_S21"/>
    <property type="match status" value="1"/>
</dbReference>
<dbReference type="PRINTS" id="PR00976">
    <property type="entry name" value="RIBOSOMALS21"/>
</dbReference>
<dbReference type="PROSITE" id="PS01181">
    <property type="entry name" value="RIBOSOMAL_S21"/>
    <property type="match status" value="1"/>
</dbReference>
<evidence type="ECO:0000255" key="1">
    <source>
        <dbReference type="HAMAP-Rule" id="MF_00358"/>
    </source>
</evidence>
<evidence type="ECO:0000256" key="2">
    <source>
        <dbReference type="SAM" id="MobiDB-lite"/>
    </source>
</evidence>
<evidence type="ECO:0000305" key="3"/>
<keyword id="KW-0687">Ribonucleoprotein</keyword>
<keyword id="KW-0689">Ribosomal protein</keyword>
<proteinExistence type="inferred from homology"/>
<protein>
    <recommendedName>
        <fullName evidence="1">Small ribosomal subunit protein bS21</fullName>
    </recommendedName>
    <alternativeName>
        <fullName evidence="3">30S ribosomal protein S21</fullName>
    </alternativeName>
</protein>
<accession>Q47W36</accession>
<sequence length="71" mass="8548">MPVIKVRENEPFDVALRRFKRSCEKAGILSEVRRRESYEKPTWERKRKKAAAVKRAAKKVSRENARRVRMY</sequence>
<feature type="chain" id="PRO_0000266659" description="Small ribosomal subunit protein bS21">
    <location>
        <begin position="1"/>
        <end position="71"/>
    </location>
</feature>
<feature type="region of interest" description="Disordered" evidence="2">
    <location>
        <begin position="49"/>
        <end position="71"/>
    </location>
</feature>
<feature type="compositionally biased region" description="Basic residues" evidence="2">
    <location>
        <begin position="49"/>
        <end position="59"/>
    </location>
</feature>
<feature type="compositionally biased region" description="Basic and acidic residues" evidence="2">
    <location>
        <begin position="60"/>
        <end position="71"/>
    </location>
</feature>